<reference key="1">
    <citation type="journal article" date="2004" name="Nature">
        <title>Genome sequence of the Brown Norway rat yields insights into mammalian evolution.</title>
        <authorList>
            <person name="Gibbs R.A."/>
            <person name="Weinstock G.M."/>
            <person name="Metzker M.L."/>
            <person name="Muzny D.M."/>
            <person name="Sodergren E.J."/>
            <person name="Scherer S."/>
            <person name="Scott G."/>
            <person name="Steffen D."/>
            <person name="Worley K.C."/>
            <person name="Burch P.E."/>
            <person name="Okwuonu G."/>
            <person name="Hines S."/>
            <person name="Lewis L."/>
            <person name="Deramo C."/>
            <person name="Delgado O."/>
            <person name="Dugan-Rocha S."/>
            <person name="Miner G."/>
            <person name="Morgan M."/>
            <person name="Hawes A."/>
            <person name="Gill R."/>
            <person name="Holt R.A."/>
            <person name="Adams M.D."/>
            <person name="Amanatides P.G."/>
            <person name="Baden-Tillson H."/>
            <person name="Barnstead M."/>
            <person name="Chin S."/>
            <person name="Evans C.A."/>
            <person name="Ferriera S."/>
            <person name="Fosler C."/>
            <person name="Glodek A."/>
            <person name="Gu Z."/>
            <person name="Jennings D."/>
            <person name="Kraft C.L."/>
            <person name="Nguyen T."/>
            <person name="Pfannkoch C.M."/>
            <person name="Sitter C."/>
            <person name="Sutton G.G."/>
            <person name="Venter J.C."/>
            <person name="Woodage T."/>
            <person name="Smith D."/>
            <person name="Lee H.-M."/>
            <person name="Gustafson E."/>
            <person name="Cahill P."/>
            <person name="Kana A."/>
            <person name="Doucette-Stamm L."/>
            <person name="Weinstock K."/>
            <person name="Fechtel K."/>
            <person name="Weiss R.B."/>
            <person name="Dunn D.M."/>
            <person name="Green E.D."/>
            <person name="Blakesley R.W."/>
            <person name="Bouffard G.G."/>
            <person name="De Jong P.J."/>
            <person name="Osoegawa K."/>
            <person name="Zhu B."/>
            <person name="Marra M."/>
            <person name="Schein J."/>
            <person name="Bosdet I."/>
            <person name="Fjell C."/>
            <person name="Jones S."/>
            <person name="Krzywinski M."/>
            <person name="Mathewson C."/>
            <person name="Siddiqui A."/>
            <person name="Wye N."/>
            <person name="McPherson J."/>
            <person name="Zhao S."/>
            <person name="Fraser C.M."/>
            <person name="Shetty J."/>
            <person name="Shatsman S."/>
            <person name="Geer K."/>
            <person name="Chen Y."/>
            <person name="Abramzon S."/>
            <person name="Nierman W.C."/>
            <person name="Havlak P.H."/>
            <person name="Chen R."/>
            <person name="Durbin K.J."/>
            <person name="Egan A."/>
            <person name="Ren Y."/>
            <person name="Song X.-Z."/>
            <person name="Li B."/>
            <person name="Liu Y."/>
            <person name="Qin X."/>
            <person name="Cawley S."/>
            <person name="Cooney A.J."/>
            <person name="D'Souza L.M."/>
            <person name="Martin K."/>
            <person name="Wu J.Q."/>
            <person name="Gonzalez-Garay M.L."/>
            <person name="Jackson A.R."/>
            <person name="Kalafus K.J."/>
            <person name="McLeod M.P."/>
            <person name="Milosavljevic A."/>
            <person name="Virk D."/>
            <person name="Volkov A."/>
            <person name="Wheeler D.A."/>
            <person name="Zhang Z."/>
            <person name="Bailey J.A."/>
            <person name="Eichler E.E."/>
            <person name="Tuzun E."/>
            <person name="Birney E."/>
            <person name="Mongin E."/>
            <person name="Ureta-Vidal A."/>
            <person name="Woodwark C."/>
            <person name="Zdobnov E."/>
            <person name="Bork P."/>
            <person name="Suyama M."/>
            <person name="Torrents D."/>
            <person name="Alexandersson M."/>
            <person name="Trask B.J."/>
            <person name="Young J.M."/>
            <person name="Huang H."/>
            <person name="Wang H."/>
            <person name="Xing H."/>
            <person name="Daniels S."/>
            <person name="Gietzen D."/>
            <person name="Schmidt J."/>
            <person name="Stevens K."/>
            <person name="Vitt U."/>
            <person name="Wingrove J."/>
            <person name="Camara F."/>
            <person name="Mar Alba M."/>
            <person name="Abril J.F."/>
            <person name="Guigo R."/>
            <person name="Smit A."/>
            <person name="Dubchak I."/>
            <person name="Rubin E.M."/>
            <person name="Couronne O."/>
            <person name="Poliakov A."/>
            <person name="Huebner N."/>
            <person name="Ganten D."/>
            <person name="Goesele C."/>
            <person name="Hummel O."/>
            <person name="Kreitler T."/>
            <person name="Lee Y.-A."/>
            <person name="Monti J."/>
            <person name="Schulz H."/>
            <person name="Zimdahl H."/>
            <person name="Himmelbauer H."/>
            <person name="Lehrach H."/>
            <person name="Jacob H.J."/>
            <person name="Bromberg S."/>
            <person name="Gullings-Handley J."/>
            <person name="Jensen-Seaman M.I."/>
            <person name="Kwitek A.E."/>
            <person name="Lazar J."/>
            <person name="Pasko D."/>
            <person name="Tonellato P.J."/>
            <person name="Twigger S."/>
            <person name="Ponting C.P."/>
            <person name="Duarte J.M."/>
            <person name="Rice S."/>
            <person name="Goodstadt L."/>
            <person name="Beatson S.A."/>
            <person name="Emes R.D."/>
            <person name="Winter E.E."/>
            <person name="Webber C."/>
            <person name="Brandt P."/>
            <person name="Nyakatura G."/>
            <person name="Adetobi M."/>
            <person name="Chiaromonte F."/>
            <person name="Elnitski L."/>
            <person name="Eswara P."/>
            <person name="Hardison R.C."/>
            <person name="Hou M."/>
            <person name="Kolbe D."/>
            <person name="Makova K."/>
            <person name="Miller W."/>
            <person name="Nekrutenko A."/>
            <person name="Riemer C."/>
            <person name="Schwartz S."/>
            <person name="Taylor J."/>
            <person name="Yang S."/>
            <person name="Zhang Y."/>
            <person name="Lindpaintner K."/>
            <person name="Andrews T.D."/>
            <person name="Caccamo M."/>
            <person name="Clamp M."/>
            <person name="Clarke L."/>
            <person name="Curwen V."/>
            <person name="Durbin R.M."/>
            <person name="Eyras E."/>
            <person name="Searle S.M."/>
            <person name="Cooper G.M."/>
            <person name="Batzoglou S."/>
            <person name="Brudno M."/>
            <person name="Sidow A."/>
            <person name="Stone E.A."/>
            <person name="Payseur B.A."/>
            <person name="Bourque G."/>
            <person name="Lopez-Otin C."/>
            <person name="Puente X.S."/>
            <person name="Chakrabarti K."/>
            <person name="Chatterji S."/>
            <person name="Dewey C."/>
            <person name="Pachter L."/>
            <person name="Bray N."/>
            <person name="Yap V.B."/>
            <person name="Caspi A."/>
            <person name="Tesler G."/>
            <person name="Pevzner P.A."/>
            <person name="Haussler D."/>
            <person name="Roskin K.M."/>
            <person name="Baertsch R."/>
            <person name="Clawson H."/>
            <person name="Furey T.S."/>
            <person name="Hinrichs A.S."/>
            <person name="Karolchik D."/>
            <person name="Kent W.J."/>
            <person name="Rosenbloom K.R."/>
            <person name="Trumbower H."/>
            <person name="Weirauch M."/>
            <person name="Cooper D.N."/>
            <person name="Stenson P.D."/>
            <person name="Ma B."/>
            <person name="Brent M."/>
            <person name="Arumugam M."/>
            <person name="Shteynberg D."/>
            <person name="Copley R.R."/>
            <person name="Taylor M.S."/>
            <person name="Riethman H."/>
            <person name="Mudunuri U."/>
            <person name="Peterson J."/>
            <person name="Guyer M."/>
            <person name="Felsenfeld A."/>
            <person name="Old S."/>
            <person name="Mockrin S."/>
            <person name="Collins F.S."/>
        </authorList>
    </citation>
    <scope>NUCLEOTIDE SEQUENCE [LARGE SCALE GENOMIC DNA]</scope>
    <source>
        <strain>Brown Norway</strain>
    </source>
</reference>
<reference key="2">
    <citation type="journal article" date="2000" name="Biochem. J.">
        <title>Identification of Rab6 as an N-ethylmaleimide-sensitive fusion protein-binding protein.</title>
        <authorList>
            <person name="Han S.Y."/>
            <person name="Park D.Y."/>
            <person name="Park S.D."/>
            <person name="Hong S.H."/>
        </authorList>
    </citation>
    <scope>NUCLEOTIDE SEQUENCE [MRNA] OF 69-208</scope>
    <source>
        <strain>Sprague-Dawley</strain>
        <tissue>Lung</tissue>
    </source>
</reference>
<reference key="3">
    <citation type="journal article" date="2012" name="Nat. Commun.">
        <title>Quantitative maps of protein phosphorylation sites across 14 different rat organs and tissues.</title>
        <authorList>
            <person name="Lundby A."/>
            <person name="Secher A."/>
            <person name="Lage K."/>
            <person name="Nordsborg N.B."/>
            <person name="Dmytriyev A."/>
            <person name="Lundby C."/>
            <person name="Olsen J.V."/>
        </authorList>
    </citation>
    <scope>PHOSPHORYLATION [LARGE SCALE ANALYSIS] AT SER-184</scope>
    <scope>IDENTIFICATION BY MASS SPECTROMETRY [LARGE SCALE ANALYSIS]</scope>
</reference>
<gene>
    <name evidence="5" type="primary">Rab6a</name>
    <name type="synonym">Rab6</name>
</gene>
<proteinExistence type="evidence at protein level"/>
<sequence length="208" mass="23590">MSAGGDFGNPLRKFKLVFLGEQSVGKTSLITRFMYDSFDNTYQATIGIDFLSKTMYLEDRTVRLQLWDTAGQERFRSLIPSYIRDSTVAVVVYDITNVNSFQQTTKWIDDVRTERGSDVIIMLVGNKTDLADKRQVSIEEGERKAKELNVMFIETSAKAGYNVKQLFRRVAAALPGMESTQDRSREDMIDIKLEKPQEQPVNEGGCSC</sequence>
<feature type="initiator methionine" description="Removed" evidence="2">
    <location>
        <position position="1"/>
    </location>
</feature>
<feature type="chain" id="PRO_0000121114" description="Ras-related protein Rab-6A">
    <location>
        <begin position="2"/>
        <end position="208"/>
    </location>
</feature>
<feature type="short sequence motif" description="Switch 1" evidence="2">
    <location>
        <begin position="32"/>
        <end position="50"/>
    </location>
</feature>
<feature type="short sequence motif" description="Switch 2" evidence="2">
    <location>
        <begin position="69"/>
        <end position="88"/>
    </location>
</feature>
<feature type="binding site" evidence="2">
    <location>
        <position position="23"/>
    </location>
    <ligand>
        <name>GTP</name>
        <dbReference type="ChEBI" id="CHEBI:37565"/>
    </ligand>
</feature>
<feature type="binding site" evidence="2">
    <location>
        <position position="24"/>
    </location>
    <ligand>
        <name>GTP</name>
        <dbReference type="ChEBI" id="CHEBI:37565"/>
    </ligand>
</feature>
<feature type="binding site" evidence="2">
    <location>
        <position position="25"/>
    </location>
    <ligand>
        <name>GTP</name>
        <dbReference type="ChEBI" id="CHEBI:37565"/>
    </ligand>
</feature>
<feature type="binding site" evidence="2">
    <location>
        <position position="26"/>
    </location>
    <ligand>
        <name>GTP</name>
        <dbReference type="ChEBI" id="CHEBI:37565"/>
    </ligand>
</feature>
<feature type="binding site" evidence="2">
    <location>
        <position position="27"/>
    </location>
    <ligand>
        <name>GTP</name>
        <dbReference type="ChEBI" id="CHEBI:37565"/>
    </ligand>
</feature>
<feature type="binding site" evidence="2">
    <location>
        <position position="27"/>
    </location>
    <ligand>
        <name>Mg(2+)</name>
        <dbReference type="ChEBI" id="CHEBI:18420"/>
    </ligand>
</feature>
<feature type="binding site" evidence="2">
    <location>
        <position position="28"/>
    </location>
    <ligand>
        <name>GTP</name>
        <dbReference type="ChEBI" id="CHEBI:37565"/>
    </ligand>
</feature>
<feature type="binding site" evidence="2">
    <location>
        <position position="39"/>
    </location>
    <ligand>
        <name>GTP</name>
        <dbReference type="ChEBI" id="CHEBI:37565"/>
    </ligand>
</feature>
<feature type="binding site" evidence="2">
    <location>
        <position position="40"/>
    </location>
    <ligand>
        <name>GTP</name>
        <dbReference type="ChEBI" id="CHEBI:37565"/>
    </ligand>
</feature>
<feature type="binding site" evidence="2">
    <location>
        <position position="42"/>
    </location>
    <ligand>
        <name>GTP</name>
        <dbReference type="ChEBI" id="CHEBI:37565"/>
    </ligand>
</feature>
<feature type="binding site" evidence="2">
    <location>
        <position position="45"/>
    </location>
    <ligand>
        <name>GTP</name>
        <dbReference type="ChEBI" id="CHEBI:37565"/>
    </ligand>
</feature>
<feature type="binding site" evidence="2">
    <location>
        <position position="45"/>
    </location>
    <ligand>
        <name>Mg(2+)</name>
        <dbReference type="ChEBI" id="CHEBI:18420"/>
    </ligand>
</feature>
<feature type="binding site" evidence="2">
    <location>
        <position position="68"/>
    </location>
    <ligand>
        <name>Mg(2+)</name>
        <dbReference type="ChEBI" id="CHEBI:18420"/>
    </ligand>
</feature>
<feature type="binding site" evidence="2">
    <location>
        <position position="71"/>
    </location>
    <ligand>
        <name>GTP</name>
        <dbReference type="ChEBI" id="CHEBI:37565"/>
    </ligand>
</feature>
<feature type="binding site" evidence="2">
    <location>
        <position position="126"/>
    </location>
    <ligand>
        <name>GTP</name>
        <dbReference type="ChEBI" id="CHEBI:37565"/>
    </ligand>
</feature>
<feature type="binding site" evidence="2">
    <location>
        <position position="127"/>
    </location>
    <ligand>
        <name>GTP</name>
        <dbReference type="ChEBI" id="CHEBI:37565"/>
    </ligand>
</feature>
<feature type="binding site" evidence="2">
    <location>
        <position position="129"/>
    </location>
    <ligand>
        <name>GTP</name>
        <dbReference type="ChEBI" id="CHEBI:37565"/>
    </ligand>
</feature>
<feature type="binding site" evidence="2">
    <location>
        <position position="156"/>
    </location>
    <ligand>
        <name>GTP</name>
        <dbReference type="ChEBI" id="CHEBI:37565"/>
    </ligand>
</feature>
<feature type="binding site" evidence="2">
    <location>
        <position position="157"/>
    </location>
    <ligand>
        <name>GTP</name>
        <dbReference type="ChEBI" id="CHEBI:37565"/>
    </ligand>
</feature>
<feature type="binding site" evidence="2">
    <location>
        <position position="158"/>
    </location>
    <ligand>
        <name>GTP</name>
        <dbReference type="ChEBI" id="CHEBI:37565"/>
    </ligand>
</feature>
<feature type="modified residue" description="N-acetylserine" evidence="2">
    <location>
        <position position="2"/>
    </location>
</feature>
<feature type="modified residue" description="Phosphoserine" evidence="6">
    <location>
        <position position="184"/>
    </location>
</feature>
<feature type="modified residue" description="Cysteine methyl ester" evidence="1">
    <location>
        <position position="208"/>
    </location>
</feature>
<feature type="lipid moiety-binding region" description="S-geranylgeranyl cysteine" evidence="1">
    <location>
        <position position="206"/>
    </location>
</feature>
<feature type="lipid moiety-binding region" description="S-geranylgeranyl cysteine" evidence="1">
    <location>
        <position position="208"/>
    </location>
</feature>
<dbReference type="EC" id="3.6.5.2" evidence="2"/>
<dbReference type="EMBL" id="AC145474">
    <property type="status" value="NOT_ANNOTATED_CDS"/>
    <property type="molecule type" value="Genomic_DNA"/>
</dbReference>
<dbReference type="EMBL" id="AF148210">
    <property type="protein sequence ID" value="AAD38018.1"/>
    <property type="molecule type" value="mRNA"/>
</dbReference>
<dbReference type="RefSeq" id="NP_001401384.1">
    <property type="nucleotide sequence ID" value="NM_001414455.1"/>
</dbReference>
<dbReference type="RefSeq" id="XP_006229856.1">
    <property type="nucleotide sequence ID" value="XM_006229794.2"/>
</dbReference>
<dbReference type="SMR" id="Q9WVB1"/>
<dbReference type="BioGRID" id="249922">
    <property type="interactions" value="2"/>
</dbReference>
<dbReference type="FunCoup" id="Q9WVB1">
    <property type="interactions" value="3841"/>
</dbReference>
<dbReference type="IntAct" id="Q9WVB1">
    <property type="interactions" value="5"/>
</dbReference>
<dbReference type="MINT" id="Q9WVB1"/>
<dbReference type="STRING" id="10116.ENSRNOP00000025104"/>
<dbReference type="iPTMnet" id="Q9WVB1"/>
<dbReference type="PhosphoSitePlus" id="Q9WVB1"/>
<dbReference type="jPOST" id="Q9WVB1"/>
<dbReference type="PaxDb" id="10116-ENSRNOP00000025104"/>
<dbReference type="GeneID" id="84379"/>
<dbReference type="UCSC" id="RGD:619737">
    <property type="organism name" value="rat"/>
</dbReference>
<dbReference type="AGR" id="RGD:619737"/>
<dbReference type="RGD" id="619737">
    <property type="gene designation" value="Rab6a"/>
</dbReference>
<dbReference type="eggNOG" id="KOG0094">
    <property type="taxonomic scope" value="Eukaryota"/>
</dbReference>
<dbReference type="HOGENOM" id="CLU_041217_10_2_1"/>
<dbReference type="InParanoid" id="Q9WVB1"/>
<dbReference type="PhylomeDB" id="Q9WVB1"/>
<dbReference type="Reactome" id="R-RNO-6798695">
    <property type="pathway name" value="Neutrophil degranulation"/>
</dbReference>
<dbReference type="Reactome" id="R-RNO-6811436">
    <property type="pathway name" value="COPI-independent Golgi-to-ER retrograde traffic"/>
</dbReference>
<dbReference type="Reactome" id="R-RNO-6811440">
    <property type="pathway name" value="Retrograde transport at the Trans-Golgi-Network"/>
</dbReference>
<dbReference type="Reactome" id="R-RNO-8854214">
    <property type="pathway name" value="TBC/RABGAPs"/>
</dbReference>
<dbReference type="Reactome" id="R-RNO-8873719">
    <property type="pathway name" value="RAB geranylgeranylation"/>
</dbReference>
<dbReference type="Reactome" id="R-RNO-8876198">
    <property type="pathway name" value="RAB GEFs exchange GTP for GDP on RABs"/>
</dbReference>
<dbReference type="PRO" id="PR:Q9WVB1"/>
<dbReference type="Proteomes" id="UP000002494">
    <property type="component" value="Chromosome 1"/>
</dbReference>
<dbReference type="Bgee" id="ENSRNOG00000018176">
    <property type="expression patterns" value="Expressed in Ammon's horn and 19 other cell types or tissues"/>
</dbReference>
<dbReference type="ExpressionAtlas" id="Q9WVB1">
    <property type="expression patterns" value="baseline and differential"/>
</dbReference>
<dbReference type="GO" id="GO:0002080">
    <property type="term" value="C:acrosomal membrane"/>
    <property type="evidence" value="ECO:0000250"/>
    <property type="project" value="UniProtKB"/>
</dbReference>
<dbReference type="GO" id="GO:0031410">
    <property type="term" value="C:cytoplasmic vesicle"/>
    <property type="evidence" value="ECO:0000266"/>
    <property type="project" value="RGD"/>
</dbReference>
<dbReference type="GO" id="GO:0005829">
    <property type="term" value="C:cytosol"/>
    <property type="evidence" value="ECO:0000266"/>
    <property type="project" value="RGD"/>
</dbReference>
<dbReference type="GO" id="GO:0012505">
    <property type="term" value="C:endomembrane system"/>
    <property type="evidence" value="ECO:0000318"/>
    <property type="project" value="GO_Central"/>
</dbReference>
<dbReference type="GO" id="GO:0070381">
    <property type="term" value="C:endosome to plasma membrane transport vesicle"/>
    <property type="evidence" value="ECO:0000266"/>
    <property type="project" value="RGD"/>
</dbReference>
<dbReference type="GO" id="GO:0005794">
    <property type="term" value="C:Golgi apparatus"/>
    <property type="evidence" value="ECO:0000250"/>
    <property type="project" value="UniProtKB"/>
</dbReference>
<dbReference type="GO" id="GO:0000139">
    <property type="term" value="C:Golgi membrane"/>
    <property type="evidence" value="ECO:0000250"/>
    <property type="project" value="UniProtKB"/>
</dbReference>
<dbReference type="GO" id="GO:0016020">
    <property type="term" value="C:membrane"/>
    <property type="evidence" value="ECO:0000266"/>
    <property type="project" value="RGD"/>
</dbReference>
<dbReference type="GO" id="GO:0098793">
    <property type="term" value="C:presynapse"/>
    <property type="evidence" value="ECO:0000314"/>
    <property type="project" value="SynGO"/>
</dbReference>
<dbReference type="GO" id="GO:0005802">
    <property type="term" value="C:trans-Golgi network"/>
    <property type="evidence" value="ECO:0000266"/>
    <property type="project" value="RGD"/>
</dbReference>
<dbReference type="GO" id="GO:0001671">
    <property type="term" value="F:ATPase activator activity"/>
    <property type="evidence" value="ECO:0000314"/>
    <property type="project" value="RGD"/>
</dbReference>
<dbReference type="GO" id="GO:0051117">
    <property type="term" value="F:ATPase binding"/>
    <property type="evidence" value="ECO:0000353"/>
    <property type="project" value="RGD"/>
</dbReference>
<dbReference type="GO" id="GO:0005525">
    <property type="term" value="F:GTP binding"/>
    <property type="evidence" value="ECO:0000314"/>
    <property type="project" value="RGD"/>
</dbReference>
<dbReference type="GO" id="GO:0003924">
    <property type="term" value="F:GTPase activity"/>
    <property type="evidence" value="ECO:0000250"/>
    <property type="project" value="UniProtKB"/>
</dbReference>
<dbReference type="GO" id="GO:0031489">
    <property type="term" value="F:myosin V binding"/>
    <property type="evidence" value="ECO:0000266"/>
    <property type="project" value="RGD"/>
</dbReference>
<dbReference type="GO" id="GO:0019904">
    <property type="term" value="F:protein domain specific binding"/>
    <property type="evidence" value="ECO:0000266"/>
    <property type="project" value="RGD"/>
</dbReference>
<dbReference type="GO" id="GO:0019882">
    <property type="term" value="P:antigen processing and presentation"/>
    <property type="evidence" value="ECO:0000266"/>
    <property type="project" value="RGD"/>
</dbReference>
<dbReference type="GO" id="GO:0034498">
    <property type="term" value="P:early endosome to Golgi transport"/>
    <property type="evidence" value="ECO:0000266"/>
    <property type="project" value="RGD"/>
</dbReference>
<dbReference type="GO" id="GO:0006891">
    <property type="term" value="P:intra-Golgi vesicle-mediated transport"/>
    <property type="evidence" value="ECO:0000318"/>
    <property type="project" value="GO_Central"/>
</dbReference>
<dbReference type="GO" id="GO:0006886">
    <property type="term" value="P:intracellular protein transport"/>
    <property type="evidence" value="ECO:0000318"/>
    <property type="project" value="GO_Central"/>
</dbReference>
<dbReference type="GO" id="GO:0034067">
    <property type="term" value="P:protein localization to Golgi apparatus"/>
    <property type="evidence" value="ECO:0000250"/>
    <property type="project" value="UniProtKB"/>
</dbReference>
<dbReference type="GO" id="GO:1903292">
    <property type="term" value="P:protein localization to Golgi membrane"/>
    <property type="evidence" value="ECO:0000250"/>
    <property type="project" value="UniProtKB"/>
</dbReference>
<dbReference type="GO" id="GO:0032482">
    <property type="term" value="P:Rab protein signal transduction"/>
    <property type="evidence" value="ECO:0000305"/>
    <property type="project" value="RGD"/>
</dbReference>
<dbReference type="GO" id="GO:0042147">
    <property type="term" value="P:retrograde transport, endosome to Golgi"/>
    <property type="evidence" value="ECO:0000318"/>
    <property type="project" value="GO_Central"/>
</dbReference>
<dbReference type="GO" id="GO:0006890">
    <property type="term" value="P:retrograde vesicle-mediated transport, Golgi to endoplasmic reticulum"/>
    <property type="evidence" value="ECO:0000250"/>
    <property type="project" value="UniProtKB"/>
</dbReference>
<dbReference type="CDD" id="cd01861">
    <property type="entry name" value="Rab6"/>
    <property type="match status" value="1"/>
</dbReference>
<dbReference type="FunFam" id="3.40.50.300:FF:000139">
    <property type="entry name" value="ras-related protein Rab-6A isoform X1"/>
    <property type="match status" value="1"/>
</dbReference>
<dbReference type="Gene3D" id="3.40.50.300">
    <property type="entry name" value="P-loop containing nucleotide triphosphate hydrolases"/>
    <property type="match status" value="1"/>
</dbReference>
<dbReference type="InterPro" id="IPR027417">
    <property type="entry name" value="P-loop_NTPase"/>
</dbReference>
<dbReference type="InterPro" id="IPR050227">
    <property type="entry name" value="Rab"/>
</dbReference>
<dbReference type="InterPro" id="IPR005225">
    <property type="entry name" value="Small_GTP-bd"/>
</dbReference>
<dbReference type="InterPro" id="IPR001806">
    <property type="entry name" value="Small_GTPase"/>
</dbReference>
<dbReference type="NCBIfam" id="TIGR00231">
    <property type="entry name" value="small_GTP"/>
    <property type="match status" value="1"/>
</dbReference>
<dbReference type="PANTHER" id="PTHR47977">
    <property type="entry name" value="RAS-RELATED PROTEIN RAB"/>
    <property type="match status" value="1"/>
</dbReference>
<dbReference type="Pfam" id="PF00071">
    <property type="entry name" value="Ras"/>
    <property type="match status" value="1"/>
</dbReference>
<dbReference type="PRINTS" id="PR00449">
    <property type="entry name" value="RASTRNSFRMNG"/>
</dbReference>
<dbReference type="SMART" id="SM00175">
    <property type="entry name" value="RAB"/>
    <property type="match status" value="1"/>
</dbReference>
<dbReference type="SMART" id="SM00176">
    <property type="entry name" value="RAN"/>
    <property type="match status" value="1"/>
</dbReference>
<dbReference type="SMART" id="SM00173">
    <property type="entry name" value="RAS"/>
    <property type="match status" value="1"/>
</dbReference>
<dbReference type="SMART" id="SM00174">
    <property type="entry name" value="RHO"/>
    <property type="match status" value="1"/>
</dbReference>
<dbReference type="SUPFAM" id="SSF52540">
    <property type="entry name" value="P-loop containing nucleoside triphosphate hydrolases"/>
    <property type="match status" value="1"/>
</dbReference>
<dbReference type="PROSITE" id="PS51419">
    <property type="entry name" value="RAB"/>
    <property type="match status" value="1"/>
</dbReference>
<organism>
    <name type="scientific">Rattus norvegicus</name>
    <name type="common">Rat</name>
    <dbReference type="NCBI Taxonomy" id="10116"/>
    <lineage>
        <taxon>Eukaryota</taxon>
        <taxon>Metazoa</taxon>
        <taxon>Chordata</taxon>
        <taxon>Craniata</taxon>
        <taxon>Vertebrata</taxon>
        <taxon>Euteleostomi</taxon>
        <taxon>Mammalia</taxon>
        <taxon>Eutheria</taxon>
        <taxon>Euarchontoglires</taxon>
        <taxon>Glires</taxon>
        <taxon>Rodentia</taxon>
        <taxon>Myomorpha</taxon>
        <taxon>Muroidea</taxon>
        <taxon>Muridae</taxon>
        <taxon>Murinae</taxon>
        <taxon>Rattus</taxon>
    </lineage>
</organism>
<comment type="function">
    <text evidence="2">The small GTPases Rab are key regulators of intracellular membrane trafficking, from the formation of transport vesicles to their fusion with membranes. Rabs cycle between an inactive GDP-bound form and an active GTP-bound form that is able to recruit to membranes different sets of downstream effectors directly responsible for vesicle formation, movement, tethering and fusion. RAB6A acts as a regulator of COPI-independent retrograde transport from the Golgi apparatus towards the endoplasmic reticulum (ER). Has a low GTPase activity. Recruits VPS13B to the Golgi membrane. Plays a role in neuron projection development.</text>
</comment>
<comment type="catalytic activity">
    <reaction evidence="2">
        <text>GTP + H2O = GDP + phosphate + H(+)</text>
        <dbReference type="Rhea" id="RHEA:19669"/>
        <dbReference type="ChEBI" id="CHEBI:15377"/>
        <dbReference type="ChEBI" id="CHEBI:15378"/>
        <dbReference type="ChEBI" id="CHEBI:37565"/>
        <dbReference type="ChEBI" id="CHEBI:43474"/>
        <dbReference type="ChEBI" id="CHEBI:58189"/>
        <dbReference type="EC" id="3.6.5.2"/>
    </reaction>
    <physiologicalReaction direction="left-to-right" evidence="2">
        <dbReference type="Rhea" id="RHEA:19670"/>
    </physiologicalReaction>
</comment>
<comment type="cofactor">
    <cofactor evidence="2">
        <name>Mg(2+)</name>
        <dbReference type="ChEBI" id="CHEBI:18420"/>
    </cofactor>
</comment>
<comment type="activity regulation">
    <text evidence="2">Regulated by guanine nucleotide exchange factors (GEFs) which promote the exchange of bound GDP for free GTP. Regulated by GTPase activating proteins (GAPs) which increase the GTP hydrolysis activity. Inhibited by GDP dissociation inhibitors (GDIs).</text>
</comment>
<comment type="subunit">
    <text evidence="2 3">Interacts with BICDL1; leads to its accumulation in the pericentrosomal region (By similarity). Interacts with BICD2; the interaction is direct (By similarity). Interacts with SCYL1BP1 (By similarity). Interacts with VSP52 (By similarity). Interacts with RABGAP1 (By similarity). Interacts with GCC2 (via its GRIP domain) (By similarity). Interacts with RAB6IP1 (via its RUN 1 domain) (By similarity). Interacts with TMF1 (By similarity). Interacts with CIMAP3 (By similarity). Interacts (GTP-bound) with APBA1/MINT1 isoform 2, also called Mint1_826, but not with isoform 1 (By similarity). Interacts with RIC1; the interaction is direct with a preference for RAB6A-GDP (By similarity). Interacts with RGP1; the interaction is direct with a preference for RAB6A-GDP (By similarity). Interacts with DYNLRB1; the interaction is direct (By similarity). Interacts with BICD1 (By similarity). Interacts with VPS13B (By similarity).</text>
</comment>
<comment type="subcellular location">
    <subcellularLocation>
        <location evidence="2">Golgi apparatus membrane</location>
        <topology evidence="2">Lipid-anchor</topology>
    </subcellularLocation>
    <subcellularLocation>
        <location evidence="3">Cytoplasmic vesicle</location>
        <location evidence="3">Secretory vesicle</location>
        <location evidence="3">Acrosome membrane</location>
        <topology evidence="4">Peripheral membrane protein</topology>
    </subcellularLocation>
    <text>BICD2 facilitates its targeting to Golgi apparatus membrane.</text>
</comment>
<comment type="domain">
    <text evidence="2">Switch 1, switch 2 and the interswitch regions are characteristic of Rab GTPases and mediate the interactions with Rab downstream effectors. The switch regions undergo conformational changes upon nucleotide binding which drives interaction with specific sets of effector proteins, with most effectors only binding to GTP-bound Rab.</text>
</comment>
<comment type="PTM">
    <text evidence="2">Prenylated.</text>
</comment>
<comment type="similarity">
    <text evidence="4">Belongs to the small GTPase superfamily. Rab family.</text>
</comment>
<name>RAB6A_RAT</name>
<accession>Q9WVB1</accession>
<keyword id="KW-0007">Acetylation</keyword>
<keyword id="KW-0968">Cytoplasmic vesicle</keyword>
<keyword id="KW-0931">ER-Golgi transport</keyword>
<keyword id="KW-0333">Golgi apparatus</keyword>
<keyword id="KW-0342">GTP-binding</keyword>
<keyword id="KW-0378">Hydrolase</keyword>
<keyword id="KW-0449">Lipoprotein</keyword>
<keyword id="KW-0460">Magnesium</keyword>
<keyword id="KW-0472">Membrane</keyword>
<keyword id="KW-0479">Metal-binding</keyword>
<keyword id="KW-0488">Methylation</keyword>
<keyword id="KW-0547">Nucleotide-binding</keyword>
<keyword id="KW-0597">Phosphoprotein</keyword>
<keyword id="KW-0636">Prenylation</keyword>
<keyword id="KW-0653">Protein transport</keyword>
<keyword id="KW-1185">Reference proteome</keyword>
<keyword id="KW-0813">Transport</keyword>
<protein>
    <recommendedName>
        <fullName>Ras-related protein Rab-6A</fullName>
        <shortName>Rab-6</shortName>
        <ecNumber evidence="2">3.6.5.2</ecNumber>
    </recommendedName>
</protein>
<evidence type="ECO:0000250" key="1"/>
<evidence type="ECO:0000250" key="2">
    <source>
        <dbReference type="UniProtKB" id="P20340"/>
    </source>
</evidence>
<evidence type="ECO:0000250" key="3">
    <source>
        <dbReference type="UniProtKB" id="P35279"/>
    </source>
</evidence>
<evidence type="ECO:0000305" key="4"/>
<evidence type="ECO:0000312" key="5">
    <source>
        <dbReference type="RGD" id="619737"/>
    </source>
</evidence>
<evidence type="ECO:0007744" key="6">
    <source>
    </source>
</evidence>